<sequence length="1770" mass="202039">MESQQLHQNPHSLHGSAYASVTSKEVPSNQDPLAVSASNLPEFDRDSTKVNSQQETTPGTSAVPENHHHVSPQPASVPPPQNGQYQQHGMMTPNKAMASNWAHYQQPSMMTCSHYQTSPAYYQPDPHYPLPQYIPPLSTSSPDPIDSQNQHSEVPQAETKVRNNVLPPHTLTSEENFSTWVKFYIRFLKNSNLGDIIPNDQGEIKSQMTYEEHAYIYNTFQAFAPFHLLPTWVKQILEINYADILTVLCKSVSKMQTNNQELKDWIALANLEYDGSTSADTFEITVSTIIQRLKENNINVSDRLACQLILKGLSGDFKYLRNQYRTKTNMKLSQLFAEIQLIYDENKIMNLNKPSQYKQHSEYKNVSRTSPNTTNTKVTTRNYHRTNSSKPRAAKAHNIATSSKFSRVNNDHINESTVSSQYLSDDNELSLGQQQKESKPTHTIDSNDELPDHLLIDSGASQTLVRSAHYLHHATPNSEINIVDAQKQDIPINAIGNLHFNFQNGTKTSIKALHTPNIAYDLLSLSELANQNITACFTRNTLERSDGTVLAPIVKHGDFYWLSKKYLIPSHISKLTINNVNKSKSVNKYPYPLIHRMLGHANFRSIQKSLKKNAVTYLKESDIEWSNASTYQCPDCLIGKSTKHRHVKGSRLKYQESYEPFQYLHTDIFGPVHHLPKSAPSYFISFTDEKTRFQWVYPLHDRREESILNVFTSILAFIKNQFNARVLVIQMDRGSEYTNKTLHKFFTNRGITACYTTTADSRAHGVAERLNRTLLNDCRTLLHCSGLPNHLWFSAVEFSTIIRNSLVSPKNDKSARQHAGLAGLDITTILPFGQPVIVNNHNPDSKIHPRGIPGYALHPSRNSYGYIIYLPSLKKTVDTTNYVILQDKQSKLDQFNYDTLTFDDDLNRLTAHNQSFIEQNETEQSYDQNTESDHDYQSEIEINSDPLVNDFSSQSINPLQLDKEPVQKVRAPKEVDADISEYNILPSTIRSRTPHIINKESTEMGGTVESDTTSPRHSSTFTARNQNRPGSTNEMIDLTSQDRVNYGLENIKTTRLGGTEEPYIQRNSDTNIKYRTTNSTPSIDDRSSNSESTTPIISIETKAVCDNTPSIDTDPPEYRSSDHATPNIMPDKSSKNVTADSILDDLPLPDLTHKSPTDTSDVSKDIPHIHSRQTNSSLGGMDDSNVLTTTKSKKRSLEDNETEIEVSRDTWNNKNMRSLEPPRSKKRINLIAAIKGVKSIKPVRTTLRYDEAITYNKDNKEKDRYVEAYHKEISQLLKMNTWDTNKYYDRNDIDPKKVINSMFIFNKKRDGTHKARFVARGDIQHPDTYDSDMQSNTVHHYALMTSLSIALDNDYYITQLDISSAYLYADIKEELYIRPPPHLGLNDKLLRLRKSLYGLKQSGANWYETIKSYLINCCDMQEVRGWSCVFKNSQVTICLFVDDMILFSKDLNANKKIITTLKKQYDTKIINLGESDNEIQYDILGLEIKYQRSKYMKLGMEKSLTEKLPKLNVPLNPKGKKLRAPGQPGHYIDQDELEIDEDEYKEKVHEMQKLIGLASYVGYKFRFDLLYYINTLAQHILFPSRQVLDMTYELIQFMWDTRDKQLIWHKNKPTKPDNKLVAISDASYGNQPYYKSQIGNIFLLNGKVIGGKSTKASLTCTSTTEAEIHAVSEAIPLLNNLSHLVQELNKKPIIKGLLTDSRSTISIIKSTNEEKFRNRFFGTKAMRLRDEVSGNNLYVYYIETKKNIADVMTKPLPIKTFKLLTNKWIH</sequence>
<gene>
    <name type="primary">TY2B-F</name>
    <name type="synonym">YFLWTy2-1 POL</name>
    <name type="ordered locus">YFL002W-A</name>
    <name type="ORF">FN01</name>
</gene>
<protein>
    <recommendedName>
        <fullName>Transposon Ty2-F Gag-Pol polyprotein</fullName>
    </recommendedName>
    <alternativeName>
        <fullName>TY2A-TY2B</fullName>
    </alternativeName>
    <alternativeName>
        <fullName>Transposon Ty2 TYA-TYB polyprotein</fullName>
    </alternativeName>
    <component>
        <recommendedName>
            <fullName>Capsid protein</fullName>
            <shortName>CA</shortName>
        </recommendedName>
    </component>
    <component>
        <recommendedName>
            <fullName>Ty2 protease</fullName>
            <shortName>PR</shortName>
            <ecNumber>3.4.23.-</ecNumber>
        </recommendedName>
    </component>
    <component>
        <recommendedName>
            <fullName>Integrase</fullName>
            <shortName>IN</shortName>
        </recommendedName>
    </component>
    <component>
        <recommendedName>
            <fullName>Reverse transcriptase/ribonuclease H</fullName>
            <shortName>RT</shortName>
            <shortName>RT-RH</shortName>
            <ecNumber>2.7.7.49</ecNumber>
            <ecNumber>2.7.7.7</ecNumber>
            <ecNumber>3.1.26.4</ecNumber>
        </recommendedName>
    </component>
</protein>
<name>YF21B_YEAST</name>
<proteinExistence type="inferred from homology"/>
<feature type="chain" id="PRO_0000279308" description="Transposon Ty2-F Gag-Pol polyprotein">
    <location>
        <begin position="1"/>
        <end position="1770"/>
    </location>
</feature>
<feature type="chain" id="PRO_0000279309" description="Capsid protein" evidence="1">
    <location>
        <begin position="1"/>
        <end position="397"/>
    </location>
</feature>
<feature type="chain" id="PRO_0000279310" description="Ty2 protease" evidence="1">
    <location>
        <begin position="398"/>
        <end position="578"/>
    </location>
</feature>
<feature type="chain" id="PRO_0000279311" description="Integrase" evidence="1">
    <location>
        <begin position="579"/>
        <end position="1232"/>
    </location>
</feature>
<feature type="chain" id="PRO_0000279312" description="Reverse transcriptase/ribonuclease H" evidence="1">
    <location>
        <begin position="1233"/>
        <end position="1770"/>
    </location>
</feature>
<feature type="domain" description="Integrase catalytic" evidence="2">
    <location>
        <begin position="656"/>
        <end position="831"/>
    </location>
</feature>
<feature type="domain" description="Reverse transcriptase Ty1/copia-type">
    <location>
        <begin position="1353"/>
        <end position="1491"/>
    </location>
</feature>
<feature type="domain" description="RNase H Ty1/copia-type">
    <location>
        <begin position="1625"/>
        <end position="1767"/>
    </location>
</feature>
<feature type="region of interest" description="Disordered" evidence="3">
    <location>
        <begin position="1"/>
        <end position="86"/>
    </location>
</feature>
<feature type="region of interest" description="RNA-binding" evidence="1">
    <location>
        <begin position="295"/>
        <end position="397"/>
    </location>
</feature>
<feature type="region of interest" description="Disordered" evidence="3">
    <location>
        <begin position="359"/>
        <end position="453"/>
    </location>
</feature>
<feature type="region of interest" description="Integrase-type zinc finger-like">
    <location>
        <begin position="579"/>
        <end position="636"/>
    </location>
</feature>
<feature type="region of interest" description="Disordered" evidence="3">
    <location>
        <begin position="1004"/>
        <end position="1034"/>
    </location>
</feature>
<feature type="region of interest" description="Disordered" evidence="3">
    <location>
        <begin position="1059"/>
        <end position="1135"/>
    </location>
</feature>
<feature type="region of interest" description="Disordered" evidence="3">
    <location>
        <begin position="1146"/>
        <end position="1165"/>
    </location>
</feature>
<feature type="region of interest" description="Disordered" evidence="3">
    <location>
        <begin position="1170"/>
        <end position="1205"/>
    </location>
</feature>
<feature type="short sequence motif" description="Bipartite nuclear localization signal" evidence="1">
    <location>
        <begin position="1193"/>
        <end position="1227"/>
    </location>
</feature>
<feature type="compositionally biased region" description="Polar residues" evidence="3">
    <location>
        <begin position="1"/>
        <end position="11"/>
    </location>
</feature>
<feature type="compositionally biased region" description="Polar residues" evidence="3">
    <location>
        <begin position="19"/>
        <end position="39"/>
    </location>
</feature>
<feature type="compositionally biased region" description="Polar residues" evidence="3">
    <location>
        <begin position="49"/>
        <end position="60"/>
    </location>
</feature>
<feature type="compositionally biased region" description="Low complexity" evidence="3">
    <location>
        <begin position="369"/>
        <end position="381"/>
    </location>
</feature>
<feature type="compositionally biased region" description="Polar residues" evidence="3">
    <location>
        <begin position="399"/>
        <end position="408"/>
    </location>
</feature>
<feature type="compositionally biased region" description="Polar residues" evidence="3">
    <location>
        <begin position="415"/>
        <end position="435"/>
    </location>
</feature>
<feature type="compositionally biased region" description="Polar residues" evidence="3">
    <location>
        <begin position="1009"/>
        <end position="1034"/>
    </location>
</feature>
<feature type="compositionally biased region" description="Polar residues" evidence="3">
    <location>
        <begin position="1065"/>
        <end position="1082"/>
    </location>
</feature>
<feature type="compositionally biased region" description="Basic and acidic residues" evidence="3">
    <location>
        <begin position="1151"/>
        <end position="1165"/>
    </location>
</feature>
<feature type="active site" description="For protease activity; shared with dimeric partner" evidence="1">
    <location>
        <position position="457"/>
    </location>
</feature>
<feature type="binding site" evidence="2">
    <location>
        <position position="667"/>
    </location>
    <ligand>
        <name>Mg(2+)</name>
        <dbReference type="ChEBI" id="CHEBI:18420"/>
        <label>1</label>
        <note>catalytic; for integrase activity</note>
    </ligand>
</feature>
<feature type="binding site" evidence="2">
    <location>
        <position position="732"/>
    </location>
    <ligand>
        <name>Mg(2+)</name>
        <dbReference type="ChEBI" id="CHEBI:18420"/>
        <label>1</label>
        <note>catalytic; for integrase activity</note>
    </ligand>
</feature>
<feature type="binding site" evidence="2">
    <location>
        <position position="1361"/>
    </location>
    <ligand>
        <name>Mg(2+)</name>
        <dbReference type="ChEBI" id="CHEBI:18420"/>
        <label>2</label>
        <note>catalytic; for reverse transcriptase activity</note>
    </ligand>
</feature>
<feature type="binding site" evidence="2">
    <location>
        <position position="1442"/>
    </location>
    <ligand>
        <name>Mg(2+)</name>
        <dbReference type="ChEBI" id="CHEBI:18420"/>
        <label>2</label>
        <note>catalytic; for reverse transcriptase activity</note>
    </ligand>
</feature>
<feature type="binding site" evidence="2">
    <location>
        <position position="1443"/>
    </location>
    <ligand>
        <name>Mg(2+)</name>
        <dbReference type="ChEBI" id="CHEBI:18420"/>
        <label>2</label>
        <note>catalytic; for reverse transcriptase activity</note>
    </ligand>
</feature>
<feature type="binding site" evidence="2">
    <location>
        <position position="1625"/>
    </location>
    <ligand>
        <name>Mg(2+)</name>
        <dbReference type="ChEBI" id="CHEBI:18420"/>
        <label>3</label>
        <note>catalytic; for RNase H activity</note>
    </ligand>
</feature>
<feature type="binding site" evidence="2">
    <location>
        <position position="1667"/>
    </location>
    <ligand>
        <name>Mg(2+)</name>
        <dbReference type="ChEBI" id="CHEBI:18420"/>
        <label>3</label>
        <note>catalytic; for RNase H activity</note>
    </ligand>
</feature>
<feature type="binding site" evidence="2">
    <location>
        <position position="1700"/>
    </location>
    <ligand>
        <name>Mg(2+)</name>
        <dbReference type="ChEBI" id="CHEBI:18420"/>
        <label>3</label>
        <note>catalytic; for RNase H activity</note>
    </ligand>
</feature>
<feature type="site" description="Cleavage; by Ty2 protease" evidence="1">
    <location>
        <begin position="397"/>
        <end position="398"/>
    </location>
</feature>
<feature type="site" description="Cleavage; by Ty2 protease" evidence="1">
    <location>
        <begin position="578"/>
        <end position="579"/>
    </location>
</feature>
<feature type="site" description="Cleavage; by Ty2 protease" evidence="1">
    <location>
        <begin position="1232"/>
        <end position="1233"/>
    </location>
</feature>
<comment type="function">
    <text evidence="1">Capsid protein (CA) is the structural component of the virus-like particle (VLP), forming the shell that encapsulates the retrotransposons dimeric RNA genome. The particles are assembled from trimer-clustered units and there are holes in the capsid shells that allow for the diffusion of macromolecules. CA also has nucleocapsid-like chaperone activity, promoting primer tRNA(i)-Met annealing to the multipartite primer-binding site (PBS), dimerization of Ty2 RNA and initiation of reverse transcription (By similarity).</text>
</comment>
<comment type="function">
    <text evidence="1">The aspartyl protease (PR) mediates the proteolytic cleavages of the Gag and Gag-Pol polyproteins after assembly of the VLP.</text>
</comment>
<comment type="function">
    <text evidence="1">Reverse transcriptase/ribonuclease H (RT) is a multifunctional enzyme that catalyzes the conversion of the retro-elements RNA genome into dsDNA within the VLP. The enzyme displays a DNA polymerase activity that can copy either DNA or RNA templates, and a ribonuclease H (RNase H) activity that cleaves the RNA strand of RNA-DNA heteroduplexes during plus-strand synthesis and hydrolyzes RNA primers. The conversion leads to a linear dsDNA copy of the retrotransposon that includes long terminal repeats (LTRs) at both ends (By similarity).</text>
</comment>
<comment type="function">
    <text evidence="1">Integrase (IN) targets the VLP to the nucleus, where a subparticle preintegration complex (PIC) containing at least integrase and the newly synthesized dsDNA copy of the retrotransposon must transit the nuclear membrane. Once in the nucleus, integrase performs the integration of the dsDNA into the host genome (By similarity).</text>
</comment>
<comment type="catalytic activity">
    <reaction>
        <text>DNA(n) + a 2'-deoxyribonucleoside 5'-triphosphate = DNA(n+1) + diphosphate</text>
        <dbReference type="Rhea" id="RHEA:22508"/>
        <dbReference type="Rhea" id="RHEA-COMP:17339"/>
        <dbReference type="Rhea" id="RHEA-COMP:17340"/>
        <dbReference type="ChEBI" id="CHEBI:33019"/>
        <dbReference type="ChEBI" id="CHEBI:61560"/>
        <dbReference type="ChEBI" id="CHEBI:173112"/>
        <dbReference type="EC" id="2.7.7.49"/>
    </reaction>
</comment>
<comment type="catalytic activity">
    <reaction>
        <text>DNA(n) + a 2'-deoxyribonucleoside 5'-triphosphate = DNA(n+1) + diphosphate</text>
        <dbReference type="Rhea" id="RHEA:22508"/>
        <dbReference type="Rhea" id="RHEA-COMP:17339"/>
        <dbReference type="Rhea" id="RHEA-COMP:17340"/>
        <dbReference type="ChEBI" id="CHEBI:33019"/>
        <dbReference type="ChEBI" id="CHEBI:61560"/>
        <dbReference type="ChEBI" id="CHEBI:173112"/>
        <dbReference type="EC" id="2.7.7.7"/>
    </reaction>
</comment>
<comment type="catalytic activity">
    <reaction>
        <text>Endonucleolytic cleavage to 5'-phosphomonoester.</text>
        <dbReference type="EC" id="3.1.26.4"/>
    </reaction>
</comment>
<comment type="subunit">
    <text evidence="1">The capsid protein forms a homotrimer, from which the VLPs are assembled. The protease is a homodimer, whose active site consists of two apposed aspartic acid residues (By similarity).</text>
</comment>
<comment type="subcellular location">
    <subcellularLocation>
        <location>Cytoplasm</location>
    </subcellularLocation>
    <subcellularLocation>
        <location evidence="1">Nucleus</location>
    </subcellularLocation>
</comment>
<comment type="alternative products">
    <event type="ribosomal frameshifting"/>
    <isoform>
        <id>P0CX63-1</id>
        <name>Transposon Ty2-F Gag-Pol polyprotein</name>
        <sequence type="displayed"/>
    </isoform>
    <isoform>
        <id>P0CX61-1</id>
        <name>Transposon Ty2-F Gag polyprotein</name>
        <sequence type="external"/>
    </isoform>
    <text>The Gag-Pol polyprotein is generated by a +1 ribosomal frameshift.</text>
</comment>
<comment type="domain">
    <text evidence="1">The C-terminal RNA-binding region of CA is sufficient for all its nucleocapsid-like chaperone activities.</text>
</comment>
<comment type="domain">
    <text evidence="1">Integrase core domain contains the D-x(n)-D-x(35)-E motif, named for the phylogenetically conserved glutamic acid and aspartic acid residues and the invariant 35 amino acid spacing between the second and third acidic residues. Each acidic residue of the D,D(35)E motif is independently essential for the 3'-processing and strand transfer activities of purified integrase protein (By similarity).</text>
</comment>
<comment type="PTM">
    <text evidence="1">Initially, virus-like particles (VLPs) are composed of the structural unprocessed proteins Gag and Gag-Pol, and also contain the host initiator methionine tRNA (tRNA(i)-Met) which serves as a primer for minus-strand DNA synthesis, and a dimer of genomic Ty RNA. Processing of the polyproteins occurs within the particle and proceeds by an ordered pathway, called maturation. First, the protease (PR) is released by autocatalytic cleavage of the Gag-Pol polyprotein, and this cleavage is a prerequisite for subsequent processing at the remaining sites to release the mature structural and catalytic proteins. Maturation takes place prior to the RT reaction and is required to produce transposition-competent VLPs (By similarity).</text>
</comment>
<comment type="miscellaneous">
    <text>Retrotransposons are mobile genetic entities that are able to replicate via an RNA intermediate and a reverse transcription step. In contrast to retroviruses, retrotransposons are non-infectious, lack an envelope and remain intracellular. Ty2 retrotransposons belong to the copia elements (pseudoviridae).</text>
</comment>
<comment type="miscellaneous">
    <molecule>Isoform Transposon Ty2-F Gag-Pol polyprotein</molecule>
    <text>Produced by +1 ribosomal frameshifting between codon Leu-431 and Gly-432 of the YFL002W-B ORF.</text>
</comment>
<comment type="sequence caution" evidence="4">
    <conflict type="erroneous gene model prediction">
        <sequence resource="EMBL-CDS" id="BAA09237"/>
    </conflict>
</comment>
<evidence type="ECO:0000250" key="1"/>
<evidence type="ECO:0000255" key="2">
    <source>
        <dbReference type="PROSITE-ProRule" id="PRU00457"/>
    </source>
</evidence>
<evidence type="ECO:0000256" key="3">
    <source>
        <dbReference type="SAM" id="MobiDB-lite"/>
    </source>
</evidence>
<evidence type="ECO:0000305" key="4"/>
<reference key="1">
    <citation type="journal article" date="1995" name="Nat. Genet.">
        <title>Analysis of the nucleotide sequence of chromosome VI from Saccharomyces cerevisiae.</title>
        <authorList>
            <person name="Murakami Y."/>
            <person name="Naitou M."/>
            <person name="Hagiwara H."/>
            <person name="Shibata T."/>
            <person name="Ozawa M."/>
            <person name="Sasanuma S."/>
            <person name="Sasanuma M."/>
            <person name="Tsuchiya Y."/>
            <person name="Soeda E."/>
            <person name="Yokoyama K."/>
            <person name="Yamazaki M."/>
            <person name="Tashiro H."/>
            <person name="Eki T."/>
        </authorList>
    </citation>
    <scope>NUCLEOTIDE SEQUENCE [LARGE SCALE GENOMIC DNA]</scope>
    <source>
        <strain>ATCC 204508 / S288c</strain>
    </source>
</reference>
<reference key="2">
    <citation type="journal article" date="2014" name="G3 (Bethesda)">
        <title>The reference genome sequence of Saccharomyces cerevisiae: Then and now.</title>
        <authorList>
            <person name="Engel S.R."/>
            <person name="Dietrich F.S."/>
            <person name="Fisk D.G."/>
            <person name="Binkley G."/>
            <person name="Balakrishnan R."/>
            <person name="Costanzo M.C."/>
            <person name="Dwight S.S."/>
            <person name="Hitz B.C."/>
            <person name="Karra K."/>
            <person name="Nash R.S."/>
            <person name="Weng S."/>
            <person name="Wong E.D."/>
            <person name="Lloyd P."/>
            <person name="Skrzypek M.S."/>
            <person name="Miyasato S.R."/>
            <person name="Simison M."/>
            <person name="Cherry J.M."/>
        </authorList>
    </citation>
    <scope>GENOME REANNOTATION</scope>
    <source>
        <strain>ATCC 204508 / S288c</strain>
    </source>
</reference>
<reference key="3">
    <citation type="journal article" date="1998" name="Genome Res.">
        <title>Transposable elements and genome organization: a comprehensive survey of retrotransposons revealed by the complete Saccharomyces cerevisiae genome sequence.</title>
        <authorList>
            <person name="Kim J.M."/>
            <person name="Vanguri S."/>
            <person name="Boeke J.D."/>
            <person name="Gabriel A."/>
            <person name="Voytas D.F."/>
        </authorList>
    </citation>
    <scope>NOMENCLATURE</scope>
</reference>
<reference key="4">
    <citation type="journal article" date="2005" name="Cytogenet. Genome Res.">
        <title>Happy together: the life and times of Ty retrotransposons and their hosts.</title>
        <authorList>
            <person name="Lesage P."/>
            <person name="Todeschini A.L."/>
        </authorList>
    </citation>
    <scope>REVIEW</scope>
</reference>
<accession>P0CX63</accession>
<accession>D6VTM7</accession>
<accession>Q05369</accession>
<accession>Q12503</accession>
<dbReference type="EC" id="3.4.23.-"/>
<dbReference type="EC" id="2.7.7.49"/>
<dbReference type="EC" id="2.7.7.7"/>
<dbReference type="EC" id="3.1.26.4"/>
<dbReference type="EMBL" id="D50617">
    <property type="protein sequence ID" value="BAA09237.1"/>
    <property type="status" value="ALT_SEQ"/>
    <property type="molecule type" value="Genomic_DNA"/>
</dbReference>
<dbReference type="EMBL" id="BK006940">
    <property type="protein sequence ID" value="DAA12437.1"/>
    <property type="molecule type" value="Genomic_DNA"/>
</dbReference>
<dbReference type="PIR" id="S58651">
    <property type="entry name" value="S58651"/>
</dbReference>
<dbReference type="RefSeq" id="NP_058163.1">
    <molecule id="P0CX63-1"/>
    <property type="nucleotide sequence ID" value="NM_001184402.2"/>
</dbReference>
<dbReference type="RefSeq" id="NP_116653.1">
    <molecule id="P0CX63-1"/>
    <property type="nucleotide sequence ID" value="NM_001180862.2"/>
</dbReference>
<dbReference type="BioGRID" id="31146">
    <property type="interactions" value="5"/>
</dbReference>
<dbReference type="BioGRID" id="33410">
    <property type="interactions" value="4"/>
</dbReference>
<dbReference type="FunCoup" id="P0CX63">
    <property type="interactions" value="67"/>
</dbReference>
<dbReference type="MEROPS" id="A11.003"/>
<dbReference type="PaxDb" id="4932-YFL002W-A"/>
<dbReference type="PeptideAtlas" id="P0CX63"/>
<dbReference type="GeneID" id="850548"/>
<dbReference type="KEGG" id="sce:YFL002W-A"/>
<dbReference type="KEGG" id="sce:YGR161W-B"/>
<dbReference type="AGR" id="SGD:S000002962"/>
<dbReference type="SGD" id="S000002962">
    <property type="gene designation" value="YFL002W-A"/>
</dbReference>
<dbReference type="VEuPathDB" id="FungiDB:YFL002W-A"/>
<dbReference type="VEuPathDB" id="FungiDB:YGR161W-B"/>
<dbReference type="eggNOG" id="KOG0017">
    <property type="taxonomic scope" value="Eukaryota"/>
</dbReference>
<dbReference type="HOGENOM" id="CLU_244151_0_0_1"/>
<dbReference type="InParanoid" id="P0CX63"/>
<dbReference type="OrthoDB" id="4046078at2759"/>
<dbReference type="Proteomes" id="UP000002311">
    <property type="component" value="Chromosome VI"/>
</dbReference>
<dbReference type="RNAct" id="P0CX63">
    <property type="molecule type" value="protein"/>
</dbReference>
<dbReference type="GO" id="GO:0005737">
    <property type="term" value="C:cytoplasm"/>
    <property type="evidence" value="ECO:0007669"/>
    <property type="project" value="UniProtKB-SubCell"/>
</dbReference>
<dbReference type="GO" id="GO:0005634">
    <property type="term" value="C:nucleus"/>
    <property type="evidence" value="ECO:0000314"/>
    <property type="project" value="SGD"/>
</dbReference>
<dbReference type="GO" id="GO:0004190">
    <property type="term" value="F:aspartic-type endopeptidase activity"/>
    <property type="evidence" value="ECO:0007669"/>
    <property type="project" value="UniProtKB-KW"/>
</dbReference>
<dbReference type="GO" id="GO:0005524">
    <property type="term" value="F:ATP binding"/>
    <property type="evidence" value="ECO:0007669"/>
    <property type="project" value="UniProtKB-KW"/>
</dbReference>
<dbReference type="GO" id="GO:0003677">
    <property type="term" value="F:DNA binding"/>
    <property type="evidence" value="ECO:0007669"/>
    <property type="project" value="UniProtKB-KW"/>
</dbReference>
<dbReference type="GO" id="GO:0003887">
    <property type="term" value="F:DNA-directed DNA polymerase activity"/>
    <property type="evidence" value="ECO:0007669"/>
    <property type="project" value="UniProtKB-KW"/>
</dbReference>
<dbReference type="GO" id="GO:0003723">
    <property type="term" value="F:RNA binding"/>
    <property type="evidence" value="ECO:0007669"/>
    <property type="project" value="UniProtKB-KW"/>
</dbReference>
<dbReference type="GO" id="GO:0003964">
    <property type="term" value="F:RNA-directed DNA polymerase activity"/>
    <property type="evidence" value="ECO:0007669"/>
    <property type="project" value="UniProtKB-KW"/>
</dbReference>
<dbReference type="GO" id="GO:0004523">
    <property type="term" value="F:RNA-DNA hybrid ribonuclease activity"/>
    <property type="evidence" value="ECO:0007669"/>
    <property type="project" value="UniProtKB-EC"/>
</dbReference>
<dbReference type="GO" id="GO:0008270">
    <property type="term" value="F:zinc ion binding"/>
    <property type="evidence" value="ECO:0007669"/>
    <property type="project" value="UniProtKB-KW"/>
</dbReference>
<dbReference type="GO" id="GO:0015074">
    <property type="term" value="P:DNA integration"/>
    <property type="evidence" value="ECO:0007669"/>
    <property type="project" value="UniProtKB-KW"/>
</dbReference>
<dbReference type="GO" id="GO:0006310">
    <property type="term" value="P:DNA recombination"/>
    <property type="evidence" value="ECO:0007669"/>
    <property type="project" value="UniProtKB-KW"/>
</dbReference>
<dbReference type="GO" id="GO:0006508">
    <property type="term" value="P:proteolysis"/>
    <property type="evidence" value="ECO:0007669"/>
    <property type="project" value="UniProtKB-KW"/>
</dbReference>
<dbReference type="GO" id="GO:0032196">
    <property type="term" value="P:transposition"/>
    <property type="evidence" value="ECO:0007669"/>
    <property type="project" value="UniProtKB-KW"/>
</dbReference>
<dbReference type="GO" id="GO:0075523">
    <property type="term" value="P:viral translational frameshifting"/>
    <property type="evidence" value="ECO:0007669"/>
    <property type="project" value="UniProtKB-KW"/>
</dbReference>
<dbReference type="CDD" id="cd09272">
    <property type="entry name" value="RNase_HI_RT_Ty1"/>
    <property type="match status" value="1"/>
</dbReference>
<dbReference type="FunFam" id="3.30.420.10:FF:000050">
    <property type="entry name" value="Transposon Ty2-DR3 Gag-Pol polyprotein"/>
    <property type="match status" value="1"/>
</dbReference>
<dbReference type="Gene3D" id="3.30.420.10">
    <property type="entry name" value="Ribonuclease H-like superfamily/Ribonuclease H"/>
    <property type="match status" value="1"/>
</dbReference>
<dbReference type="InterPro" id="IPR043502">
    <property type="entry name" value="DNA/RNA_pol_sf"/>
</dbReference>
<dbReference type="InterPro" id="IPR001584">
    <property type="entry name" value="Integrase_cat-core"/>
</dbReference>
<dbReference type="InterPro" id="IPR054722">
    <property type="entry name" value="PolX-like_BBD"/>
</dbReference>
<dbReference type="InterPro" id="IPR039537">
    <property type="entry name" value="Retrotran_Ty1/copia-like"/>
</dbReference>
<dbReference type="InterPro" id="IPR012337">
    <property type="entry name" value="RNaseH-like_sf"/>
</dbReference>
<dbReference type="InterPro" id="IPR036397">
    <property type="entry name" value="RNaseH_sf"/>
</dbReference>
<dbReference type="InterPro" id="IPR013103">
    <property type="entry name" value="RVT_2"/>
</dbReference>
<dbReference type="InterPro" id="IPR015820">
    <property type="entry name" value="TYA"/>
</dbReference>
<dbReference type="PANTHER" id="PTHR42648">
    <property type="entry name" value="TRANSPOSASE, PUTATIVE-RELATED"/>
    <property type="match status" value="1"/>
</dbReference>
<dbReference type="PANTHER" id="PTHR42648:SF11">
    <property type="entry name" value="TRANSPOSON TY4-P GAG-POL POLYPROTEIN"/>
    <property type="match status" value="1"/>
</dbReference>
<dbReference type="Pfam" id="PF22936">
    <property type="entry name" value="Pol_BBD"/>
    <property type="match status" value="1"/>
</dbReference>
<dbReference type="Pfam" id="PF00665">
    <property type="entry name" value="rve"/>
    <property type="match status" value="1"/>
</dbReference>
<dbReference type="Pfam" id="PF07727">
    <property type="entry name" value="RVT_2"/>
    <property type="match status" value="1"/>
</dbReference>
<dbReference type="Pfam" id="PF01021">
    <property type="entry name" value="TYA"/>
    <property type="match status" value="1"/>
</dbReference>
<dbReference type="SUPFAM" id="SSF56672">
    <property type="entry name" value="DNA/RNA polymerases"/>
    <property type="match status" value="1"/>
</dbReference>
<dbReference type="SUPFAM" id="SSF53098">
    <property type="entry name" value="Ribonuclease H-like"/>
    <property type="match status" value="1"/>
</dbReference>
<dbReference type="PROSITE" id="PS50994">
    <property type="entry name" value="INTEGRASE"/>
    <property type="match status" value="1"/>
</dbReference>
<organism>
    <name type="scientific">Saccharomyces cerevisiae (strain ATCC 204508 / S288c)</name>
    <name type="common">Baker's yeast</name>
    <dbReference type="NCBI Taxonomy" id="559292"/>
    <lineage>
        <taxon>Eukaryota</taxon>
        <taxon>Fungi</taxon>
        <taxon>Dikarya</taxon>
        <taxon>Ascomycota</taxon>
        <taxon>Saccharomycotina</taxon>
        <taxon>Saccharomycetes</taxon>
        <taxon>Saccharomycetales</taxon>
        <taxon>Saccharomycetaceae</taxon>
        <taxon>Saccharomyces</taxon>
    </lineage>
</organism>
<keyword id="KW-0064">Aspartyl protease</keyword>
<keyword id="KW-0067">ATP-binding</keyword>
<keyword id="KW-0963">Cytoplasm</keyword>
<keyword id="KW-0229">DNA integration</keyword>
<keyword id="KW-0233">DNA recombination</keyword>
<keyword id="KW-0238">DNA-binding</keyword>
<keyword id="KW-0239">DNA-directed DNA polymerase</keyword>
<keyword id="KW-0255">Endonuclease</keyword>
<keyword id="KW-0378">Hydrolase</keyword>
<keyword id="KW-0460">Magnesium</keyword>
<keyword id="KW-0479">Metal-binding</keyword>
<keyword id="KW-0511">Multifunctional enzyme</keyword>
<keyword id="KW-0540">Nuclease</keyword>
<keyword id="KW-0547">Nucleotide-binding</keyword>
<keyword id="KW-0548">Nucleotidyltransferase</keyword>
<keyword id="KW-0539">Nucleus</keyword>
<keyword id="KW-0645">Protease</keyword>
<keyword id="KW-1185">Reference proteome</keyword>
<keyword id="KW-0688">Ribosomal frameshifting</keyword>
<keyword id="KW-0694">RNA-binding</keyword>
<keyword id="KW-0695">RNA-directed DNA polymerase</keyword>
<keyword id="KW-0808">Transferase</keyword>
<keyword id="KW-0814">Transposable element</keyword>
<keyword id="KW-0815">Transposition</keyword>
<keyword id="KW-1188">Viral release from host cell</keyword>
<keyword id="KW-0917">Virion maturation</keyword>
<keyword id="KW-0862">Zinc</keyword>
<keyword id="KW-0863">Zinc-finger</keyword>